<proteinExistence type="inferred from homology"/>
<evidence type="ECO:0000255" key="1">
    <source>
        <dbReference type="HAMAP-Rule" id="MF_00163"/>
    </source>
</evidence>
<sequence>MANNFSQLAKKSRNELSSSKVKKEVIENPPLEIFKLGNDVLRTNAKRIGKVDLDTRNLAKDMLKSMYSAKGIGLAAPQVGISKELLVIDINFEDSAAEPLILINPEITAFGNTLNSYEEGCLSIPGVYLNVVRPSTIKLRFSDEMGRPRKMNADGLLARCIQHEVDHLRGVLFVDRVTSKEDLKTELKKEGFQMKDVFPISQS</sequence>
<gene>
    <name evidence="1" type="primary">def</name>
    <name type="ordered locus">P9515_00771</name>
</gene>
<feature type="chain" id="PRO_0000301079" description="Peptide deformylase">
    <location>
        <begin position="1"/>
        <end position="203"/>
    </location>
</feature>
<feature type="active site" evidence="1">
    <location>
        <position position="164"/>
    </location>
</feature>
<feature type="binding site" evidence="1">
    <location>
        <position position="121"/>
    </location>
    <ligand>
        <name>Fe cation</name>
        <dbReference type="ChEBI" id="CHEBI:24875"/>
    </ligand>
</feature>
<feature type="binding site" evidence="1">
    <location>
        <position position="163"/>
    </location>
    <ligand>
        <name>Fe cation</name>
        <dbReference type="ChEBI" id="CHEBI:24875"/>
    </ligand>
</feature>
<feature type="binding site" evidence="1">
    <location>
        <position position="167"/>
    </location>
    <ligand>
        <name>Fe cation</name>
        <dbReference type="ChEBI" id="CHEBI:24875"/>
    </ligand>
</feature>
<name>DEF_PROM5</name>
<keyword id="KW-0378">Hydrolase</keyword>
<keyword id="KW-0408">Iron</keyword>
<keyword id="KW-0479">Metal-binding</keyword>
<keyword id="KW-0648">Protein biosynthesis</keyword>
<reference key="1">
    <citation type="journal article" date="2007" name="PLoS Genet.">
        <title>Patterns and implications of gene gain and loss in the evolution of Prochlorococcus.</title>
        <authorList>
            <person name="Kettler G.C."/>
            <person name="Martiny A.C."/>
            <person name="Huang K."/>
            <person name="Zucker J."/>
            <person name="Coleman M.L."/>
            <person name="Rodrigue S."/>
            <person name="Chen F."/>
            <person name="Lapidus A."/>
            <person name="Ferriera S."/>
            <person name="Johnson J."/>
            <person name="Steglich C."/>
            <person name="Church G.M."/>
            <person name="Richardson P."/>
            <person name="Chisholm S.W."/>
        </authorList>
    </citation>
    <scope>NUCLEOTIDE SEQUENCE [LARGE SCALE GENOMIC DNA]</scope>
    <source>
        <strain>MIT 9515</strain>
    </source>
</reference>
<protein>
    <recommendedName>
        <fullName evidence="1">Peptide deformylase</fullName>
        <shortName evidence="1">PDF</shortName>
        <ecNumber evidence="1">3.5.1.88</ecNumber>
    </recommendedName>
    <alternativeName>
        <fullName evidence="1">Polypeptide deformylase</fullName>
    </alternativeName>
</protein>
<organism>
    <name type="scientific">Prochlorococcus marinus (strain MIT 9515)</name>
    <dbReference type="NCBI Taxonomy" id="167542"/>
    <lineage>
        <taxon>Bacteria</taxon>
        <taxon>Bacillati</taxon>
        <taxon>Cyanobacteriota</taxon>
        <taxon>Cyanophyceae</taxon>
        <taxon>Synechococcales</taxon>
        <taxon>Prochlorococcaceae</taxon>
        <taxon>Prochlorococcus</taxon>
    </lineage>
</organism>
<accession>A2BU25</accession>
<dbReference type="EC" id="3.5.1.88" evidence="1"/>
<dbReference type="EMBL" id="CP000552">
    <property type="protein sequence ID" value="ABM71286.1"/>
    <property type="molecule type" value="Genomic_DNA"/>
</dbReference>
<dbReference type="RefSeq" id="WP_011819403.1">
    <property type="nucleotide sequence ID" value="NC_008817.1"/>
</dbReference>
<dbReference type="SMR" id="A2BU25"/>
<dbReference type="STRING" id="167542.P9515_00771"/>
<dbReference type="GeneID" id="60201278"/>
<dbReference type="KEGG" id="pmc:P9515_00771"/>
<dbReference type="eggNOG" id="COG0242">
    <property type="taxonomic scope" value="Bacteria"/>
</dbReference>
<dbReference type="HOGENOM" id="CLU_061901_4_2_3"/>
<dbReference type="OrthoDB" id="9784988at2"/>
<dbReference type="Proteomes" id="UP000001589">
    <property type="component" value="Chromosome"/>
</dbReference>
<dbReference type="GO" id="GO:0046872">
    <property type="term" value="F:metal ion binding"/>
    <property type="evidence" value="ECO:0007669"/>
    <property type="project" value="UniProtKB-KW"/>
</dbReference>
<dbReference type="GO" id="GO:0042586">
    <property type="term" value="F:peptide deformylase activity"/>
    <property type="evidence" value="ECO:0007669"/>
    <property type="project" value="UniProtKB-UniRule"/>
</dbReference>
<dbReference type="GO" id="GO:0043686">
    <property type="term" value="P:co-translational protein modification"/>
    <property type="evidence" value="ECO:0007669"/>
    <property type="project" value="TreeGrafter"/>
</dbReference>
<dbReference type="GO" id="GO:0006412">
    <property type="term" value="P:translation"/>
    <property type="evidence" value="ECO:0007669"/>
    <property type="project" value="UniProtKB-UniRule"/>
</dbReference>
<dbReference type="CDD" id="cd00487">
    <property type="entry name" value="Pep_deformylase"/>
    <property type="match status" value="1"/>
</dbReference>
<dbReference type="Gene3D" id="3.90.45.10">
    <property type="entry name" value="Peptide deformylase"/>
    <property type="match status" value="1"/>
</dbReference>
<dbReference type="HAMAP" id="MF_00163">
    <property type="entry name" value="Pep_deformylase"/>
    <property type="match status" value="1"/>
</dbReference>
<dbReference type="InterPro" id="IPR023635">
    <property type="entry name" value="Peptide_deformylase"/>
</dbReference>
<dbReference type="InterPro" id="IPR036821">
    <property type="entry name" value="Peptide_deformylase_sf"/>
</dbReference>
<dbReference type="NCBIfam" id="TIGR00079">
    <property type="entry name" value="pept_deformyl"/>
    <property type="match status" value="1"/>
</dbReference>
<dbReference type="NCBIfam" id="NF001159">
    <property type="entry name" value="PRK00150.1-3"/>
    <property type="match status" value="1"/>
</dbReference>
<dbReference type="PANTHER" id="PTHR10458">
    <property type="entry name" value="PEPTIDE DEFORMYLASE"/>
    <property type="match status" value="1"/>
</dbReference>
<dbReference type="PANTHER" id="PTHR10458:SF22">
    <property type="entry name" value="PEPTIDE DEFORMYLASE"/>
    <property type="match status" value="1"/>
</dbReference>
<dbReference type="Pfam" id="PF01327">
    <property type="entry name" value="Pep_deformylase"/>
    <property type="match status" value="1"/>
</dbReference>
<dbReference type="PIRSF" id="PIRSF004749">
    <property type="entry name" value="Pep_def"/>
    <property type="match status" value="1"/>
</dbReference>
<dbReference type="PRINTS" id="PR01576">
    <property type="entry name" value="PDEFORMYLASE"/>
</dbReference>
<dbReference type="SUPFAM" id="SSF56420">
    <property type="entry name" value="Peptide deformylase"/>
    <property type="match status" value="1"/>
</dbReference>
<comment type="function">
    <text evidence="1">Removes the formyl group from the N-terminal Met of newly synthesized proteins. Requires at least a dipeptide for an efficient rate of reaction. N-terminal L-methionine is a prerequisite for activity but the enzyme has broad specificity at other positions.</text>
</comment>
<comment type="catalytic activity">
    <reaction evidence="1">
        <text>N-terminal N-formyl-L-methionyl-[peptide] + H2O = N-terminal L-methionyl-[peptide] + formate</text>
        <dbReference type="Rhea" id="RHEA:24420"/>
        <dbReference type="Rhea" id="RHEA-COMP:10639"/>
        <dbReference type="Rhea" id="RHEA-COMP:10640"/>
        <dbReference type="ChEBI" id="CHEBI:15377"/>
        <dbReference type="ChEBI" id="CHEBI:15740"/>
        <dbReference type="ChEBI" id="CHEBI:49298"/>
        <dbReference type="ChEBI" id="CHEBI:64731"/>
        <dbReference type="EC" id="3.5.1.88"/>
    </reaction>
</comment>
<comment type="cofactor">
    <cofactor evidence="1">
        <name>Fe(2+)</name>
        <dbReference type="ChEBI" id="CHEBI:29033"/>
    </cofactor>
    <text evidence="1">Binds 1 Fe(2+) ion.</text>
</comment>
<comment type="similarity">
    <text evidence="1">Belongs to the polypeptide deformylase family.</text>
</comment>